<name>CHEB3_SYNWW</name>
<protein>
    <recommendedName>
        <fullName evidence="1">Protein-glutamate methylesterase/protein-glutamine glutaminase 3</fullName>
        <ecNumber evidence="1">3.1.1.61</ecNumber>
        <ecNumber evidence="1">3.5.1.44</ecNumber>
    </recommendedName>
</protein>
<organism>
    <name type="scientific">Syntrophomonas wolfei subsp. wolfei (strain DSM 2245B / Goettingen)</name>
    <dbReference type="NCBI Taxonomy" id="335541"/>
    <lineage>
        <taxon>Bacteria</taxon>
        <taxon>Bacillati</taxon>
        <taxon>Bacillota</taxon>
        <taxon>Clostridia</taxon>
        <taxon>Eubacteriales</taxon>
        <taxon>Syntrophomonadaceae</taxon>
        <taxon>Syntrophomonas</taxon>
    </lineage>
</organism>
<sequence>MIKVLIADDSALMRKMLKQILESDPEIQVVGAARDGEDVVIKAREYRPDVVTMDVNMPKQDGITALQYIVNEEICPVLMVSSLTQEGAMTTFEALELGAFDFVGKPGGTVSSSSDMKKVAAEIINKIRAAAQLKNRVVKRERLARGQRQPVVKKKAPPRPGREVTKAVAMGISTGGPKMIYEVVPLIPPDINAALFLVQHMPPNFTPAYVKRLNEACQIEVIEARAGIKVEPGVLYVGSGGRHLNLVKNTAGDVIIRLSSKPDHLFIPSVSVMMESVLKVFSNRTIGVLMTGMGNDGADSMVNIRQAGGITIAESEESAIVFGMPGDAIKRGGAEIVVPIWNIAREIIRAVNR</sequence>
<proteinExistence type="inferred from homology"/>
<reference key="1">
    <citation type="journal article" date="2010" name="Environ. Microbiol.">
        <title>The genome of Syntrophomonas wolfei: new insights into syntrophic metabolism and biohydrogen production.</title>
        <authorList>
            <person name="Sieber J.R."/>
            <person name="Sims D.R."/>
            <person name="Han C."/>
            <person name="Kim E."/>
            <person name="Lykidis A."/>
            <person name="Lapidus A.L."/>
            <person name="McDonnald E."/>
            <person name="Rohlin L."/>
            <person name="Culley D.E."/>
            <person name="Gunsalus R."/>
            <person name="McInerney M.J."/>
        </authorList>
    </citation>
    <scope>NUCLEOTIDE SEQUENCE [LARGE SCALE GENOMIC DNA]</scope>
    <source>
        <strain>DSM 2245B / Goettingen</strain>
    </source>
</reference>
<keyword id="KW-0145">Chemotaxis</keyword>
<keyword id="KW-0963">Cytoplasm</keyword>
<keyword id="KW-0378">Hydrolase</keyword>
<keyword id="KW-0597">Phosphoprotein</keyword>
<keyword id="KW-1185">Reference proteome</keyword>
<dbReference type="EC" id="3.1.1.61" evidence="1"/>
<dbReference type="EC" id="3.5.1.44" evidence="1"/>
<dbReference type="EMBL" id="CP000448">
    <property type="protein sequence ID" value="ABI68756.1"/>
    <property type="molecule type" value="Genomic_DNA"/>
</dbReference>
<dbReference type="RefSeq" id="WP_011640855.1">
    <property type="nucleotide sequence ID" value="NC_008346.1"/>
</dbReference>
<dbReference type="SMR" id="Q0AWZ8"/>
<dbReference type="STRING" id="335541.Swol_1449"/>
<dbReference type="KEGG" id="swo:Swol_1449"/>
<dbReference type="eggNOG" id="COG2201">
    <property type="taxonomic scope" value="Bacteria"/>
</dbReference>
<dbReference type="HOGENOM" id="CLU_000445_51_0_9"/>
<dbReference type="OrthoDB" id="9793421at2"/>
<dbReference type="Proteomes" id="UP000001968">
    <property type="component" value="Chromosome"/>
</dbReference>
<dbReference type="GO" id="GO:0005737">
    <property type="term" value="C:cytoplasm"/>
    <property type="evidence" value="ECO:0007669"/>
    <property type="project" value="UniProtKB-SubCell"/>
</dbReference>
<dbReference type="GO" id="GO:0000156">
    <property type="term" value="F:phosphorelay response regulator activity"/>
    <property type="evidence" value="ECO:0007669"/>
    <property type="project" value="InterPro"/>
</dbReference>
<dbReference type="GO" id="GO:0008984">
    <property type="term" value="F:protein-glutamate methylesterase activity"/>
    <property type="evidence" value="ECO:0007669"/>
    <property type="project" value="UniProtKB-UniRule"/>
</dbReference>
<dbReference type="GO" id="GO:0050568">
    <property type="term" value="F:protein-glutamine glutaminase activity"/>
    <property type="evidence" value="ECO:0007669"/>
    <property type="project" value="UniProtKB-UniRule"/>
</dbReference>
<dbReference type="GO" id="GO:0006935">
    <property type="term" value="P:chemotaxis"/>
    <property type="evidence" value="ECO:0007669"/>
    <property type="project" value="UniProtKB-UniRule"/>
</dbReference>
<dbReference type="CDD" id="cd16432">
    <property type="entry name" value="CheB_Rec"/>
    <property type="match status" value="1"/>
</dbReference>
<dbReference type="CDD" id="cd17541">
    <property type="entry name" value="REC_CheB-like"/>
    <property type="match status" value="1"/>
</dbReference>
<dbReference type="Gene3D" id="3.40.50.2300">
    <property type="match status" value="1"/>
</dbReference>
<dbReference type="Gene3D" id="3.40.50.180">
    <property type="entry name" value="Methylesterase CheB, C-terminal domain"/>
    <property type="match status" value="1"/>
</dbReference>
<dbReference type="HAMAP" id="MF_00099">
    <property type="entry name" value="CheB_chemtxs"/>
    <property type="match status" value="1"/>
</dbReference>
<dbReference type="InterPro" id="IPR008248">
    <property type="entry name" value="CheB-like"/>
</dbReference>
<dbReference type="InterPro" id="IPR035909">
    <property type="entry name" value="CheB_C"/>
</dbReference>
<dbReference type="InterPro" id="IPR011006">
    <property type="entry name" value="CheY-like_superfamily"/>
</dbReference>
<dbReference type="InterPro" id="IPR000673">
    <property type="entry name" value="Sig_transdc_resp-reg_Me-estase"/>
</dbReference>
<dbReference type="InterPro" id="IPR001789">
    <property type="entry name" value="Sig_transdc_resp-reg_receiver"/>
</dbReference>
<dbReference type="NCBIfam" id="NF001965">
    <property type="entry name" value="PRK00742.1"/>
    <property type="match status" value="1"/>
</dbReference>
<dbReference type="PANTHER" id="PTHR42872">
    <property type="entry name" value="PROTEIN-GLUTAMATE METHYLESTERASE/PROTEIN-GLUTAMINE GLUTAMINASE"/>
    <property type="match status" value="1"/>
</dbReference>
<dbReference type="PANTHER" id="PTHR42872:SF6">
    <property type="entry name" value="PROTEIN-GLUTAMATE METHYLESTERASE_PROTEIN-GLUTAMINE GLUTAMINASE"/>
    <property type="match status" value="1"/>
</dbReference>
<dbReference type="Pfam" id="PF01339">
    <property type="entry name" value="CheB_methylest"/>
    <property type="match status" value="1"/>
</dbReference>
<dbReference type="Pfam" id="PF00072">
    <property type="entry name" value="Response_reg"/>
    <property type="match status" value="1"/>
</dbReference>
<dbReference type="PIRSF" id="PIRSF000876">
    <property type="entry name" value="RR_chemtxs_CheB"/>
    <property type="match status" value="1"/>
</dbReference>
<dbReference type="SMART" id="SM00448">
    <property type="entry name" value="REC"/>
    <property type="match status" value="1"/>
</dbReference>
<dbReference type="SUPFAM" id="SSF52172">
    <property type="entry name" value="CheY-like"/>
    <property type="match status" value="1"/>
</dbReference>
<dbReference type="SUPFAM" id="SSF52738">
    <property type="entry name" value="Methylesterase CheB, C-terminal domain"/>
    <property type="match status" value="1"/>
</dbReference>
<dbReference type="PROSITE" id="PS50122">
    <property type="entry name" value="CHEB"/>
    <property type="match status" value="1"/>
</dbReference>
<dbReference type="PROSITE" id="PS50110">
    <property type="entry name" value="RESPONSE_REGULATORY"/>
    <property type="match status" value="1"/>
</dbReference>
<gene>
    <name evidence="1" type="primary">cheB3</name>
    <name type="ordered locus">Swol_1449</name>
</gene>
<feature type="chain" id="PRO_0000264327" description="Protein-glutamate methylesterase/protein-glutamine glutaminase 3">
    <location>
        <begin position="1"/>
        <end position="353"/>
    </location>
</feature>
<feature type="domain" description="Response regulatory" evidence="1">
    <location>
        <begin position="3"/>
        <end position="120"/>
    </location>
</feature>
<feature type="domain" description="CheB-type methylesterase" evidence="1">
    <location>
        <begin position="158"/>
        <end position="353"/>
    </location>
</feature>
<feature type="active site" evidence="1">
    <location>
        <position position="173"/>
    </location>
</feature>
<feature type="active site" evidence="1">
    <location>
        <position position="200"/>
    </location>
</feature>
<feature type="active site" evidence="1">
    <location>
        <position position="296"/>
    </location>
</feature>
<feature type="modified residue" description="4-aspartylphosphate" evidence="1">
    <location>
        <position position="54"/>
    </location>
</feature>
<accession>Q0AWZ8</accession>
<comment type="function">
    <text evidence="1">Involved in chemotaxis. Part of a chemotaxis signal transduction system that modulates chemotaxis in response to various stimuli. Catalyzes the demethylation of specific methylglutamate residues introduced into the chemoreceptors (methyl-accepting chemotaxis proteins or MCP) by CheR. Also mediates the irreversible deamidation of specific glutamine residues to glutamic acid.</text>
</comment>
<comment type="catalytic activity">
    <reaction evidence="1">
        <text>[protein]-L-glutamate 5-O-methyl ester + H2O = L-glutamyl-[protein] + methanol + H(+)</text>
        <dbReference type="Rhea" id="RHEA:23236"/>
        <dbReference type="Rhea" id="RHEA-COMP:10208"/>
        <dbReference type="Rhea" id="RHEA-COMP:10311"/>
        <dbReference type="ChEBI" id="CHEBI:15377"/>
        <dbReference type="ChEBI" id="CHEBI:15378"/>
        <dbReference type="ChEBI" id="CHEBI:17790"/>
        <dbReference type="ChEBI" id="CHEBI:29973"/>
        <dbReference type="ChEBI" id="CHEBI:82795"/>
        <dbReference type="EC" id="3.1.1.61"/>
    </reaction>
</comment>
<comment type="catalytic activity">
    <reaction evidence="1">
        <text>L-glutaminyl-[protein] + H2O = L-glutamyl-[protein] + NH4(+)</text>
        <dbReference type="Rhea" id="RHEA:16441"/>
        <dbReference type="Rhea" id="RHEA-COMP:10207"/>
        <dbReference type="Rhea" id="RHEA-COMP:10208"/>
        <dbReference type="ChEBI" id="CHEBI:15377"/>
        <dbReference type="ChEBI" id="CHEBI:28938"/>
        <dbReference type="ChEBI" id="CHEBI:29973"/>
        <dbReference type="ChEBI" id="CHEBI:30011"/>
        <dbReference type="EC" id="3.5.1.44"/>
    </reaction>
</comment>
<comment type="subcellular location">
    <subcellularLocation>
        <location evidence="1">Cytoplasm</location>
    </subcellularLocation>
</comment>
<comment type="domain">
    <text evidence="1">Contains a C-terminal catalytic domain, and an N-terminal region which modulates catalytic activity.</text>
</comment>
<comment type="PTM">
    <text evidence="1">Phosphorylated by CheA. Phosphorylation of the N-terminal regulatory domain activates the methylesterase activity.</text>
</comment>
<comment type="similarity">
    <text evidence="1">Belongs to the CheB family.</text>
</comment>
<evidence type="ECO:0000255" key="1">
    <source>
        <dbReference type="HAMAP-Rule" id="MF_00099"/>
    </source>
</evidence>